<name>SYC_CLONN</name>
<sequence length="466" mass="54274">MKLFNTMTRQKEEFKPIKDGEVSMYVCGPTVYNYFHIGNGRTFLVFDTIRRYFEYRGYKVNFIQNFTDIDDKMIKKANEENITVKELGDRFIHEYYKDADGLNIKRATANPRATEYMDEIIQFVKDLIDKGYAYEVNGDVYFSTKQFKEYGKLSGQNLDDLQAGARISVDERKKDPMDFAIWKSEKPGEPSWNCPWGKGRPGWHIECSCMAHKLLGDTIDIHAGGADLVFPHHENEIAQSEARNGKTFANYWMHSAYLNINNKKMSKSLNNFFTTREILEKYDAEVIRLFMLSAHYRTPLNFSDDLLQSAKASNERLYNAIGNLERLLDEVKVDKVTENEKEYVKNLESYKEKYIEKMDDDFNTADAISVIFDLVKDINTNINTESSKELVEYSLELIRELGKPLGILQKSTMLDLNAEIEKLIEQRQQARKDKDWALADKIRDDLKARGIVLEDTPQGVRWKREQ</sequence>
<protein>
    <recommendedName>
        <fullName evidence="1">Cysteine--tRNA ligase</fullName>
        <ecNumber evidence="1">6.1.1.16</ecNumber>
    </recommendedName>
    <alternativeName>
        <fullName evidence="1">Cysteinyl-tRNA synthetase</fullName>
        <shortName evidence="1">CysRS</shortName>
    </alternativeName>
</protein>
<reference key="1">
    <citation type="journal article" date="2006" name="Nat. Biotechnol.">
        <title>The genome and transcriptomes of the anti-tumor agent Clostridium novyi-NT.</title>
        <authorList>
            <person name="Bettegowda C."/>
            <person name="Huang X."/>
            <person name="Lin J."/>
            <person name="Cheong I."/>
            <person name="Kohli M."/>
            <person name="Szabo S.A."/>
            <person name="Zhang X."/>
            <person name="Diaz L.A. Jr."/>
            <person name="Velculescu V.E."/>
            <person name="Parmigiani G."/>
            <person name="Kinzler K.W."/>
            <person name="Vogelstein B."/>
            <person name="Zhou S."/>
        </authorList>
    </citation>
    <scope>NUCLEOTIDE SEQUENCE [LARGE SCALE GENOMIC DNA]</scope>
    <source>
        <strain>NT</strain>
    </source>
</reference>
<proteinExistence type="inferred from homology"/>
<feature type="chain" id="PRO_0000332805" description="Cysteine--tRNA ligase">
    <location>
        <begin position="1"/>
        <end position="466"/>
    </location>
</feature>
<feature type="short sequence motif" description="'HIGH' region">
    <location>
        <begin position="29"/>
        <end position="39"/>
    </location>
</feature>
<feature type="short sequence motif" description="'KMSKS' region">
    <location>
        <begin position="264"/>
        <end position="268"/>
    </location>
</feature>
<feature type="binding site" evidence="1">
    <location>
        <position position="27"/>
    </location>
    <ligand>
        <name>Zn(2+)</name>
        <dbReference type="ChEBI" id="CHEBI:29105"/>
    </ligand>
</feature>
<feature type="binding site" evidence="1">
    <location>
        <position position="207"/>
    </location>
    <ligand>
        <name>Zn(2+)</name>
        <dbReference type="ChEBI" id="CHEBI:29105"/>
    </ligand>
</feature>
<feature type="binding site" evidence="1">
    <location>
        <position position="232"/>
    </location>
    <ligand>
        <name>Zn(2+)</name>
        <dbReference type="ChEBI" id="CHEBI:29105"/>
    </ligand>
</feature>
<feature type="binding site" evidence="1">
    <location>
        <position position="236"/>
    </location>
    <ligand>
        <name>Zn(2+)</name>
        <dbReference type="ChEBI" id="CHEBI:29105"/>
    </ligand>
</feature>
<feature type="binding site" evidence="1">
    <location>
        <position position="267"/>
    </location>
    <ligand>
        <name>ATP</name>
        <dbReference type="ChEBI" id="CHEBI:30616"/>
    </ligand>
</feature>
<dbReference type="EC" id="6.1.1.16" evidence="1"/>
<dbReference type="EMBL" id="CP000382">
    <property type="protein sequence ID" value="ABK60410.1"/>
    <property type="molecule type" value="Genomic_DNA"/>
</dbReference>
<dbReference type="RefSeq" id="WP_011721197.1">
    <property type="nucleotide sequence ID" value="NC_008593.1"/>
</dbReference>
<dbReference type="SMR" id="A0PXS5"/>
<dbReference type="STRING" id="386415.NT01CX_1093"/>
<dbReference type="KEGG" id="cno:NT01CX_1093"/>
<dbReference type="PATRIC" id="fig|386415.7.peg.203"/>
<dbReference type="eggNOG" id="COG0215">
    <property type="taxonomic scope" value="Bacteria"/>
</dbReference>
<dbReference type="HOGENOM" id="CLU_013528_0_1_9"/>
<dbReference type="Proteomes" id="UP000008220">
    <property type="component" value="Chromosome"/>
</dbReference>
<dbReference type="GO" id="GO:0005829">
    <property type="term" value="C:cytosol"/>
    <property type="evidence" value="ECO:0007669"/>
    <property type="project" value="TreeGrafter"/>
</dbReference>
<dbReference type="GO" id="GO:0005524">
    <property type="term" value="F:ATP binding"/>
    <property type="evidence" value="ECO:0007669"/>
    <property type="project" value="UniProtKB-UniRule"/>
</dbReference>
<dbReference type="GO" id="GO:0004817">
    <property type="term" value="F:cysteine-tRNA ligase activity"/>
    <property type="evidence" value="ECO:0007669"/>
    <property type="project" value="UniProtKB-UniRule"/>
</dbReference>
<dbReference type="GO" id="GO:0008270">
    <property type="term" value="F:zinc ion binding"/>
    <property type="evidence" value="ECO:0007669"/>
    <property type="project" value="UniProtKB-UniRule"/>
</dbReference>
<dbReference type="GO" id="GO:0006423">
    <property type="term" value="P:cysteinyl-tRNA aminoacylation"/>
    <property type="evidence" value="ECO:0007669"/>
    <property type="project" value="UniProtKB-UniRule"/>
</dbReference>
<dbReference type="CDD" id="cd07963">
    <property type="entry name" value="Anticodon_Ia_Cys"/>
    <property type="match status" value="1"/>
</dbReference>
<dbReference type="CDD" id="cd00672">
    <property type="entry name" value="CysRS_core"/>
    <property type="match status" value="1"/>
</dbReference>
<dbReference type="FunFam" id="3.40.50.620:FF:000009">
    <property type="entry name" value="Cysteine--tRNA ligase"/>
    <property type="match status" value="1"/>
</dbReference>
<dbReference type="Gene3D" id="1.20.120.1910">
    <property type="entry name" value="Cysteine-tRNA ligase, C-terminal anti-codon recognition domain"/>
    <property type="match status" value="1"/>
</dbReference>
<dbReference type="Gene3D" id="3.40.50.620">
    <property type="entry name" value="HUPs"/>
    <property type="match status" value="1"/>
</dbReference>
<dbReference type="HAMAP" id="MF_00041">
    <property type="entry name" value="Cys_tRNA_synth"/>
    <property type="match status" value="1"/>
</dbReference>
<dbReference type="InterPro" id="IPR015803">
    <property type="entry name" value="Cys-tRNA-ligase"/>
</dbReference>
<dbReference type="InterPro" id="IPR015273">
    <property type="entry name" value="Cys-tRNA-synt_Ia_DALR"/>
</dbReference>
<dbReference type="InterPro" id="IPR024909">
    <property type="entry name" value="Cys-tRNA/MSH_ligase"/>
</dbReference>
<dbReference type="InterPro" id="IPR056411">
    <property type="entry name" value="CysS_C"/>
</dbReference>
<dbReference type="InterPro" id="IPR014729">
    <property type="entry name" value="Rossmann-like_a/b/a_fold"/>
</dbReference>
<dbReference type="InterPro" id="IPR032678">
    <property type="entry name" value="tRNA-synt_1_cat_dom"/>
</dbReference>
<dbReference type="InterPro" id="IPR009080">
    <property type="entry name" value="tRNAsynth_Ia_anticodon-bd"/>
</dbReference>
<dbReference type="NCBIfam" id="TIGR00435">
    <property type="entry name" value="cysS"/>
    <property type="match status" value="1"/>
</dbReference>
<dbReference type="PANTHER" id="PTHR10890:SF3">
    <property type="entry name" value="CYSTEINE--TRNA LIGASE, CYTOPLASMIC"/>
    <property type="match status" value="1"/>
</dbReference>
<dbReference type="PANTHER" id="PTHR10890">
    <property type="entry name" value="CYSTEINYL-TRNA SYNTHETASE"/>
    <property type="match status" value="1"/>
</dbReference>
<dbReference type="Pfam" id="PF23493">
    <property type="entry name" value="CysS_C"/>
    <property type="match status" value="1"/>
</dbReference>
<dbReference type="Pfam" id="PF09190">
    <property type="entry name" value="DALR_2"/>
    <property type="match status" value="1"/>
</dbReference>
<dbReference type="Pfam" id="PF01406">
    <property type="entry name" value="tRNA-synt_1e"/>
    <property type="match status" value="1"/>
</dbReference>
<dbReference type="PRINTS" id="PR00983">
    <property type="entry name" value="TRNASYNTHCYS"/>
</dbReference>
<dbReference type="SMART" id="SM00840">
    <property type="entry name" value="DALR_2"/>
    <property type="match status" value="1"/>
</dbReference>
<dbReference type="SUPFAM" id="SSF47323">
    <property type="entry name" value="Anticodon-binding domain of a subclass of class I aminoacyl-tRNA synthetases"/>
    <property type="match status" value="1"/>
</dbReference>
<dbReference type="SUPFAM" id="SSF52374">
    <property type="entry name" value="Nucleotidylyl transferase"/>
    <property type="match status" value="1"/>
</dbReference>
<evidence type="ECO:0000255" key="1">
    <source>
        <dbReference type="HAMAP-Rule" id="MF_00041"/>
    </source>
</evidence>
<gene>
    <name evidence="1" type="primary">cysS</name>
    <name type="ordered locus">NT01CX_1093</name>
</gene>
<organism>
    <name type="scientific">Clostridium novyi (strain NT)</name>
    <dbReference type="NCBI Taxonomy" id="386415"/>
    <lineage>
        <taxon>Bacteria</taxon>
        <taxon>Bacillati</taxon>
        <taxon>Bacillota</taxon>
        <taxon>Clostridia</taxon>
        <taxon>Eubacteriales</taxon>
        <taxon>Clostridiaceae</taxon>
        <taxon>Clostridium</taxon>
    </lineage>
</organism>
<comment type="catalytic activity">
    <reaction evidence="1">
        <text>tRNA(Cys) + L-cysteine + ATP = L-cysteinyl-tRNA(Cys) + AMP + diphosphate</text>
        <dbReference type="Rhea" id="RHEA:17773"/>
        <dbReference type="Rhea" id="RHEA-COMP:9661"/>
        <dbReference type="Rhea" id="RHEA-COMP:9679"/>
        <dbReference type="ChEBI" id="CHEBI:30616"/>
        <dbReference type="ChEBI" id="CHEBI:33019"/>
        <dbReference type="ChEBI" id="CHEBI:35235"/>
        <dbReference type="ChEBI" id="CHEBI:78442"/>
        <dbReference type="ChEBI" id="CHEBI:78517"/>
        <dbReference type="ChEBI" id="CHEBI:456215"/>
        <dbReference type="EC" id="6.1.1.16"/>
    </reaction>
</comment>
<comment type="cofactor">
    <cofactor evidence="1">
        <name>Zn(2+)</name>
        <dbReference type="ChEBI" id="CHEBI:29105"/>
    </cofactor>
    <text evidence="1">Binds 1 zinc ion per subunit.</text>
</comment>
<comment type="subunit">
    <text evidence="1">Monomer.</text>
</comment>
<comment type="subcellular location">
    <subcellularLocation>
        <location evidence="1">Cytoplasm</location>
    </subcellularLocation>
</comment>
<comment type="similarity">
    <text evidence="1">Belongs to the class-I aminoacyl-tRNA synthetase family.</text>
</comment>
<accession>A0PXS5</accession>
<keyword id="KW-0030">Aminoacyl-tRNA synthetase</keyword>
<keyword id="KW-0067">ATP-binding</keyword>
<keyword id="KW-0963">Cytoplasm</keyword>
<keyword id="KW-0436">Ligase</keyword>
<keyword id="KW-0479">Metal-binding</keyword>
<keyword id="KW-0547">Nucleotide-binding</keyword>
<keyword id="KW-0648">Protein biosynthesis</keyword>
<keyword id="KW-1185">Reference proteome</keyword>
<keyword id="KW-0862">Zinc</keyword>